<name>RLR81_PLAVT</name>
<reference key="1">
    <citation type="journal article" date="2018" name="Front. Plant Sci.">
        <title>In planta functional analysis and subcellular localization of the oomycete pathogen Plasmopara viticola candidate RXLR effector repertoire.</title>
        <authorList>
            <person name="Liu Y."/>
            <person name="Lan X."/>
            <person name="Song S."/>
            <person name="Yin L."/>
            <person name="Dry I.B."/>
            <person name="Qu J."/>
            <person name="Xiang J."/>
            <person name="Lu J."/>
        </authorList>
    </citation>
    <scope>NUCLEOTIDE SEQUENCE [MRNA]</scope>
    <scope>DOMAIN</scope>
    <scope>FUNCTION</scope>
    <scope>SUBCELLULAR LOCATION</scope>
</reference>
<dbReference type="GlyCosmos" id="P0CV27">
    <property type="glycosylation" value="1 site, No reported glycans"/>
</dbReference>
<dbReference type="GO" id="GO:0005576">
    <property type="term" value="C:extracellular region"/>
    <property type="evidence" value="ECO:0007669"/>
    <property type="project" value="UniProtKB-SubCell"/>
</dbReference>
<dbReference type="GO" id="GO:0030430">
    <property type="term" value="C:host cell cytoplasm"/>
    <property type="evidence" value="ECO:0007669"/>
    <property type="project" value="UniProtKB-SubCell"/>
</dbReference>
<dbReference type="GO" id="GO:0042025">
    <property type="term" value="C:host cell nucleus"/>
    <property type="evidence" value="ECO:0007669"/>
    <property type="project" value="UniProtKB-SubCell"/>
</dbReference>
<feature type="signal peptide" evidence="1">
    <location>
        <begin position="1"/>
        <end position="16"/>
    </location>
</feature>
<feature type="chain" id="PRO_0000447936" description="Secreted RxLR effector protein 81">
    <location>
        <begin position="17"/>
        <end position="111"/>
    </location>
</feature>
<feature type="region of interest" description="Disordered" evidence="3">
    <location>
        <begin position="73"/>
        <end position="92"/>
    </location>
</feature>
<feature type="short sequence motif" description="RxLR-dEER" evidence="7">
    <location>
        <begin position="88"/>
        <end position="91"/>
    </location>
</feature>
<feature type="glycosylation site" description="N-linked (GlcNAc...) asparagine" evidence="2">
    <location>
        <position position="52"/>
    </location>
</feature>
<sequence>MLVSMLLIIFPNGVSLSTPSLSSRNKFILRSRSSRLRFSARSFLSSASRLVNSSKMTLAFERLLRLRRVSFTKKFSSSDEDKSRDVRRRLRPASEATGAFAVRGADCAIAD</sequence>
<comment type="function">
    <text evidence="4">Secreted effector that partially suppresses the host cell death induced by cell death-inducing proteins.</text>
</comment>
<comment type="subcellular location">
    <subcellularLocation>
        <location evidence="4">Secreted</location>
    </subcellularLocation>
    <subcellularLocation>
        <location evidence="4">Host nucleus</location>
    </subcellularLocation>
    <subcellularLocation>
        <location evidence="4">Host cytoplasm</location>
    </subcellularLocation>
    <text evidence="4">Localizes to bulk/chunk-like structures within the nucleus.</text>
</comment>
<comment type="domain">
    <text evidence="7">Has the canonical translocation RxLR motif, but lacks the canonical EER motif, which characterizes most oomycete effectors identified so far.</text>
</comment>
<comment type="similarity">
    <text evidence="6">Belongs to the RxLR effector family.</text>
</comment>
<organism>
    <name type="scientific">Plasmopara viticola</name>
    <name type="common">Downy mildew of grapevine</name>
    <name type="synonym">Botrytis viticola</name>
    <dbReference type="NCBI Taxonomy" id="143451"/>
    <lineage>
        <taxon>Eukaryota</taxon>
        <taxon>Sar</taxon>
        <taxon>Stramenopiles</taxon>
        <taxon>Oomycota</taxon>
        <taxon>Peronosporales</taxon>
        <taxon>Peronosporaceae</taxon>
        <taxon>Plasmopara</taxon>
    </lineage>
</organism>
<evidence type="ECO:0000255" key="1"/>
<evidence type="ECO:0000255" key="2">
    <source>
        <dbReference type="PROSITE-ProRule" id="PRU00498"/>
    </source>
</evidence>
<evidence type="ECO:0000256" key="3">
    <source>
        <dbReference type="SAM" id="MobiDB-lite"/>
    </source>
</evidence>
<evidence type="ECO:0000269" key="4">
    <source>
    </source>
</evidence>
<evidence type="ECO:0000303" key="5">
    <source>
    </source>
</evidence>
<evidence type="ECO:0000305" key="6"/>
<evidence type="ECO:0000305" key="7">
    <source>
    </source>
</evidence>
<gene>
    <name evidence="5" type="primary">RXLR81</name>
</gene>
<accession>P0CV27</accession>
<proteinExistence type="inferred from homology"/>
<keyword id="KW-0325">Glycoprotein</keyword>
<keyword id="KW-1035">Host cytoplasm</keyword>
<keyword id="KW-1048">Host nucleus</keyword>
<keyword id="KW-0964">Secreted</keyword>
<keyword id="KW-0732">Signal</keyword>
<keyword id="KW-0843">Virulence</keyword>
<protein>
    <recommendedName>
        <fullName evidence="5">Secreted RxLR effector protein 81</fullName>
    </recommendedName>
</protein>